<protein>
    <recommendedName>
        <fullName evidence="1">Dihydroxy-acid dehydratase</fullName>
        <shortName evidence="1">DAD</shortName>
        <ecNumber evidence="1">4.2.1.9</ecNumber>
    </recommendedName>
</protein>
<proteinExistence type="inferred from homology"/>
<name>ILVD_SULTO</name>
<gene>
    <name evidence="1" type="primary">ilvD</name>
    <name type="ordered locus">STK_21720</name>
</gene>
<organism>
    <name type="scientific">Sulfurisphaera tokodaii (strain DSM 16993 / JCM 10545 / NBRC 100140 / 7)</name>
    <name type="common">Sulfolobus tokodaii</name>
    <dbReference type="NCBI Taxonomy" id="273063"/>
    <lineage>
        <taxon>Archaea</taxon>
        <taxon>Thermoproteota</taxon>
        <taxon>Thermoprotei</taxon>
        <taxon>Sulfolobales</taxon>
        <taxon>Sulfolobaceae</taxon>
        <taxon>Sulfurisphaera</taxon>
    </lineage>
</organism>
<reference key="1">
    <citation type="journal article" date="2001" name="DNA Res.">
        <title>Complete genome sequence of an aerobic thermoacidophilic Crenarchaeon, Sulfolobus tokodaii strain7.</title>
        <authorList>
            <person name="Kawarabayasi Y."/>
            <person name="Hino Y."/>
            <person name="Horikawa H."/>
            <person name="Jin-no K."/>
            <person name="Takahashi M."/>
            <person name="Sekine M."/>
            <person name="Baba S."/>
            <person name="Ankai A."/>
            <person name="Kosugi H."/>
            <person name="Hosoyama A."/>
            <person name="Fukui S."/>
            <person name="Nagai Y."/>
            <person name="Nishijima K."/>
            <person name="Otsuka R."/>
            <person name="Nakazawa H."/>
            <person name="Takamiya M."/>
            <person name="Kato Y."/>
            <person name="Yoshizawa T."/>
            <person name="Tanaka T."/>
            <person name="Kudoh Y."/>
            <person name="Yamazaki J."/>
            <person name="Kushida N."/>
            <person name="Oguchi A."/>
            <person name="Aoki K."/>
            <person name="Masuda S."/>
            <person name="Yanagii M."/>
            <person name="Nishimura M."/>
            <person name="Yamagishi A."/>
            <person name="Oshima T."/>
            <person name="Kikuchi H."/>
        </authorList>
    </citation>
    <scope>NUCLEOTIDE SEQUENCE [LARGE SCALE GENOMIC DNA]</scope>
    <source>
        <strain>DSM 16993 / JCM 10545 / NBRC 100140 / 7</strain>
    </source>
</reference>
<evidence type="ECO:0000255" key="1">
    <source>
        <dbReference type="HAMAP-Rule" id="MF_00012"/>
    </source>
</evidence>
<sequence>MNPDKKKRSNLIYGGYEKAPNRAFLKAMGLTDDDIAKPIVGVAVAWNEAGPCNIHLLGLSNIVKEGVRSGGGTPRVFTAPVVIDGIAMGSEGMKYSLVSREIVANTVELVVNAHGYDGFVALAGCDKTPPGMMMAMARLNIPSIIMYGGTTLPGNFKGKPITIQDVYEAVGAYSKGKITAEDLRLMEDNAIPGPGTCGGLYTANTMGLMTEALGLALPGSASPPAVDSARVKYAYETGKALMNLIEIGLKPRDILTFEAFENAITVLMASGGSTNAVLHLLAIAYEAGVKLTLDDFDRISQRTPEIVNMKPGGEYAMYDLHRVGGAPLIMKKLLEADLLHGDVITVTGKTVKQNLEEYKLPNVPHEHIVRPISNPFNPTGGIRILKGSLAPEGAVIKVSATKVRYHKGPARVFNSEEEAFKAVLEEKIQENDVVVIRYEGPKGGPGMREMLAVTSAIVGQGLGEKVALITDGRFSGATRGIMVGHVAPEAAVGGPIALLRDGDTIIIDANNGRLDVDLPQEELKKRADEWTPPPPKYKSGLLAQYARLVSSSSLGAVLLT</sequence>
<accession>Q96YK0</accession>
<dbReference type="EC" id="4.2.1.9" evidence="1"/>
<dbReference type="EMBL" id="BA000023">
    <property type="protein sequence ID" value="BAB67277.1"/>
    <property type="molecule type" value="Genomic_DNA"/>
</dbReference>
<dbReference type="RefSeq" id="WP_010980252.1">
    <property type="nucleotide sequence ID" value="NC_003106.2"/>
</dbReference>
<dbReference type="SMR" id="Q96YK0"/>
<dbReference type="STRING" id="273063.STK_21720"/>
<dbReference type="GeneID" id="1460245"/>
<dbReference type="KEGG" id="sto:STK_21720"/>
<dbReference type="PATRIC" id="fig|273063.9.peg.2465"/>
<dbReference type="eggNOG" id="arCOG04045">
    <property type="taxonomic scope" value="Archaea"/>
</dbReference>
<dbReference type="OrthoDB" id="8674at2157"/>
<dbReference type="UniPathway" id="UPA00047">
    <property type="reaction ID" value="UER00057"/>
</dbReference>
<dbReference type="UniPathway" id="UPA00049">
    <property type="reaction ID" value="UER00061"/>
</dbReference>
<dbReference type="Proteomes" id="UP000001015">
    <property type="component" value="Chromosome"/>
</dbReference>
<dbReference type="GO" id="GO:0051537">
    <property type="term" value="F:2 iron, 2 sulfur cluster binding"/>
    <property type="evidence" value="ECO:0007669"/>
    <property type="project" value="UniProtKB-UniRule"/>
</dbReference>
<dbReference type="GO" id="GO:0004160">
    <property type="term" value="F:dihydroxy-acid dehydratase activity"/>
    <property type="evidence" value="ECO:0007669"/>
    <property type="project" value="UniProtKB-UniRule"/>
</dbReference>
<dbReference type="GO" id="GO:0000287">
    <property type="term" value="F:magnesium ion binding"/>
    <property type="evidence" value="ECO:0007669"/>
    <property type="project" value="UniProtKB-UniRule"/>
</dbReference>
<dbReference type="GO" id="GO:0009097">
    <property type="term" value="P:isoleucine biosynthetic process"/>
    <property type="evidence" value="ECO:0007669"/>
    <property type="project" value="UniProtKB-UniRule"/>
</dbReference>
<dbReference type="GO" id="GO:0009099">
    <property type="term" value="P:L-valine biosynthetic process"/>
    <property type="evidence" value="ECO:0007669"/>
    <property type="project" value="UniProtKB-UniRule"/>
</dbReference>
<dbReference type="FunFam" id="3.50.30.80:FF:000001">
    <property type="entry name" value="Dihydroxy-acid dehydratase"/>
    <property type="match status" value="1"/>
</dbReference>
<dbReference type="Gene3D" id="3.50.30.80">
    <property type="entry name" value="IlvD/EDD C-terminal domain-like"/>
    <property type="match status" value="1"/>
</dbReference>
<dbReference type="HAMAP" id="MF_00012">
    <property type="entry name" value="IlvD"/>
    <property type="match status" value="1"/>
</dbReference>
<dbReference type="InterPro" id="IPR050165">
    <property type="entry name" value="DHAD_IlvD/Edd"/>
</dbReference>
<dbReference type="InterPro" id="IPR042096">
    <property type="entry name" value="Dihydro-acid_dehy_C"/>
</dbReference>
<dbReference type="InterPro" id="IPR004404">
    <property type="entry name" value="DihydroxyA_deHydtase"/>
</dbReference>
<dbReference type="InterPro" id="IPR020558">
    <property type="entry name" value="DiOHA_6PGluconate_deHydtase_CS"/>
</dbReference>
<dbReference type="InterPro" id="IPR056740">
    <property type="entry name" value="ILV_EDD_C"/>
</dbReference>
<dbReference type="InterPro" id="IPR000581">
    <property type="entry name" value="ILV_EDD_N"/>
</dbReference>
<dbReference type="InterPro" id="IPR037237">
    <property type="entry name" value="IlvD/EDD_N"/>
</dbReference>
<dbReference type="NCBIfam" id="TIGR00110">
    <property type="entry name" value="ilvD"/>
    <property type="match status" value="1"/>
</dbReference>
<dbReference type="NCBIfam" id="NF002068">
    <property type="entry name" value="PRK00911.1"/>
    <property type="match status" value="1"/>
</dbReference>
<dbReference type="PANTHER" id="PTHR21000">
    <property type="entry name" value="DIHYDROXY-ACID DEHYDRATASE DAD"/>
    <property type="match status" value="1"/>
</dbReference>
<dbReference type="PANTHER" id="PTHR21000:SF5">
    <property type="entry name" value="DIHYDROXY-ACID DEHYDRATASE, MITOCHONDRIAL"/>
    <property type="match status" value="1"/>
</dbReference>
<dbReference type="Pfam" id="PF24877">
    <property type="entry name" value="ILV_EDD_C"/>
    <property type="match status" value="1"/>
</dbReference>
<dbReference type="Pfam" id="PF00920">
    <property type="entry name" value="ILVD_EDD_N"/>
    <property type="match status" value="1"/>
</dbReference>
<dbReference type="SUPFAM" id="SSF143975">
    <property type="entry name" value="IlvD/EDD N-terminal domain-like"/>
    <property type="match status" value="1"/>
</dbReference>
<dbReference type="SUPFAM" id="SSF52016">
    <property type="entry name" value="LeuD/IlvD-like"/>
    <property type="match status" value="1"/>
</dbReference>
<dbReference type="PROSITE" id="PS00886">
    <property type="entry name" value="ILVD_EDD_1"/>
    <property type="match status" value="1"/>
</dbReference>
<dbReference type="PROSITE" id="PS00887">
    <property type="entry name" value="ILVD_EDD_2"/>
    <property type="match status" value="1"/>
</dbReference>
<feature type="chain" id="PRO_0000103552" description="Dihydroxy-acid dehydratase">
    <location>
        <begin position="1"/>
        <end position="560"/>
    </location>
</feature>
<feature type="active site" description="Proton acceptor" evidence="1">
    <location>
        <position position="475"/>
    </location>
</feature>
<feature type="binding site" evidence="1">
    <location>
        <position position="52"/>
    </location>
    <ligand>
        <name>[2Fe-2S] cluster</name>
        <dbReference type="ChEBI" id="CHEBI:190135"/>
    </ligand>
</feature>
<feature type="binding site" evidence="1">
    <location>
        <position position="84"/>
    </location>
    <ligand>
        <name>Mg(2+)</name>
        <dbReference type="ChEBI" id="CHEBI:18420"/>
    </ligand>
</feature>
<feature type="binding site" evidence="1">
    <location>
        <position position="125"/>
    </location>
    <ligand>
        <name>[2Fe-2S] cluster</name>
        <dbReference type="ChEBI" id="CHEBI:190135"/>
    </ligand>
</feature>
<feature type="binding site" evidence="1">
    <location>
        <position position="126"/>
    </location>
    <ligand>
        <name>Mg(2+)</name>
        <dbReference type="ChEBI" id="CHEBI:18420"/>
    </ligand>
</feature>
<feature type="binding site" description="via carbamate group" evidence="1">
    <location>
        <position position="127"/>
    </location>
    <ligand>
        <name>Mg(2+)</name>
        <dbReference type="ChEBI" id="CHEBI:18420"/>
    </ligand>
</feature>
<feature type="binding site" evidence="1">
    <location>
        <position position="197"/>
    </location>
    <ligand>
        <name>[2Fe-2S] cluster</name>
        <dbReference type="ChEBI" id="CHEBI:190135"/>
    </ligand>
</feature>
<feature type="binding site" evidence="1">
    <location>
        <position position="449"/>
    </location>
    <ligand>
        <name>Mg(2+)</name>
        <dbReference type="ChEBI" id="CHEBI:18420"/>
    </ligand>
</feature>
<feature type="modified residue" description="N6-carboxylysine" evidence="1">
    <location>
        <position position="127"/>
    </location>
</feature>
<comment type="function">
    <text evidence="1">Functions in the biosynthesis of branched-chain amino acids. Catalyzes the dehydration of (2R,3R)-2,3-dihydroxy-3-methylpentanoate (2,3-dihydroxy-3-methylvalerate) into 2-oxo-3-methylpentanoate (2-oxo-3-methylvalerate) and of (2R)-2,3-dihydroxy-3-methylbutanoate (2,3-dihydroxyisovalerate) into 2-oxo-3-methylbutanoate (2-oxoisovalerate), the penultimate precursor to L-isoleucine and L-valine, respectively.</text>
</comment>
<comment type="catalytic activity">
    <reaction evidence="1">
        <text>(2R)-2,3-dihydroxy-3-methylbutanoate = 3-methyl-2-oxobutanoate + H2O</text>
        <dbReference type="Rhea" id="RHEA:24809"/>
        <dbReference type="ChEBI" id="CHEBI:11851"/>
        <dbReference type="ChEBI" id="CHEBI:15377"/>
        <dbReference type="ChEBI" id="CHEBI:49072"/>
        <dbReference type="EC" id="4.2.1.9"/>
    </reaction>
    <physiologicalReaction direction="left-to-right" evidence="1">
        <dbReference type="Rhea" id="RHEA:24810"/>
    </physiologicalReaction>
</comment>
<comment type="catalytic activity">
    <reaction evidence="1">
        <text>(2R,3R)-2,3-dihydroxy-3-methylpentanoate = (S)-3-methyl-2-oxopentanoate + H2O</text>
        <dbReference type="Rhea" id="RHEA:27694"/>
        <dbReference type="ChEBI" id="CHEBI:15377"/>
        <dbReference type="ChEBI" id="CHEBI:35146"/>
        <dbReference type="ChEBI" id="CHEBI:49258"/>
        <dbReference type="EC" id="4.2.1.9"/>
    </reaction>
    <physiologicalReaction direction="left-to-right" evidence="1">
        <dbReference type="Rhea" id="RHEA:27695"/>
    </physiologicalReaction>
</comment>
<comment type="cofactor">
    <cofactor evidence="1">
        <name>[2Fe-2S] cluster</name>
        <dbReference type="ChEBI" id="CHEBI:190135"/>
    </cofactor>
    <text evidence="1">Binds 1 [2Fe-2S] cluster per subunit. This cluster acts as a Lewis acid cofactor.</text>
</comment>
<comment type="cofactor">
    <cofactor evidence="1">
        <name>Mg(2+)</name>
        <dbReference type="ChEBI" id="CHEBI:18420"/>
    </cofactor>
</comment>
<comment type="pathway">
    <text evidence="1">Amino-acid biosynthesis; L-isoleucine biosynthesis; L-isoleucine from 2-oxobutanoate: step 3/4.</text>
</comment>
<comment type="pathway">
    <text evidence="1">Amino-acid biosynthesis; L-valine biosynthesis; L-valine from pyruvate: step 3/4.</text>
</comment>
<comment type="subunit">
    <text evidence="1">Homodimer.</text>
</comment>
<comment type="similarity">
    <text evidence="1">Belongs to the IlvD/Edd family.</text>
</comment>
<keyword id="KW-0001">2Fe-2S</keyword>
<keyword id="KW-0028">Amino-acid biosynthesis</keyword>
<keyword id="KW-0100">Branched-chain amino acid biosynthesis</keyword>
<keyword id="KW-0408">Iron</keyword>
<keyword id="KW-0411">Iron-sulfur</keyword>
<keyword id="KW-0456">Lyase</keyword>
<keyword id="KW-0460">Magnesium</keyword>
<keyword id="KW-0479">Metal-binding</keyword>
<keyword id="KW-1185">Reference proteome</keyword>